<protein>
    <recommendedName>
        <fullName evidence="1">Fructoselysine 6-phosphate deglycase</fullName>
        <ecNumber evidence="1">3.5.-.-</ecNumber>
    </recommendedName>
</protein>
<reference key="1">
    <citation type="journal article" date="2002" name="Nucleic Acids Res.">
        <title>Genome sequence of Shigella flexneri 2a: insights into pathogenicity through comparison with genomes of Escherichia coli K12 and O157.</title>
        <authorList>
            <person name="Jin Q."/>
            <person name="Yuan Z."/>
            <person name="Xu J."/>
            <person name="Wang Y."/>
            <person name="Shen Y."/>
            <person name="Lu W."/>
            <person name="Wang J."/>
            <person name="Liu H."/>
            <person name="Yang J."/>
            <person name="Yang F."/>
            <person name="Zhang X."/>
            <person name="Zhang J."/>
            <person name="Yang G."/>
            <person name="Wu H."/>
            <person name="Qu D."/>
            <person name="Dong J."/>
            <person name="Sun L."/>
            <person name="Xue Y."/>
            <person name="Zhao A."/>
            <person name="Gao Y."/>
            <person name="Zhu J."/>
            <person name="Kan B."/>
            <person name="Ding K."/>
            <person name="Chen S."/>
            <person name="Cheng H."/>
            <person name="Yao Z."/>
            <person name="He B."/>
            <person name="Chen R."/>
            <person name="Ma D."/>
            <person name="Qiang B."/>
            <person name="Wen Y."/>
            <person name="Hou Y."/>
            <person name="Yu J."/>
        </authorList>
    </citation>
    <scope>NUCLEOTIDE SEQUENCE [LARGE SCALE GENOMIC DNA]</scope>
    <source>
        <strain>301 / Serotype 2a</strain>
    </source>
</reference>
<reference key="2">
    <citation type="journal article" date="2003" name="Infect. Immun.">
        <title>Complete genome sequence and comparative genomics of Shigella flexneri serotype 2a strain 2457T.</title>
        <authorList>
            <person name="Wei J."/>
            <person name="Goldberg M.B."/>
            <person name="Burland V."/>
            <person name="Venkatesan M.M."/>
            <person name="Deng W."/>
            <person name="Fournier G."/>
            <person name="Mayhew G.F."/>
            <person name="Plunkett G. III"/>
            <person name="Rose D.J."/>
            <person name="Darling A."/>
            <person name="Mau B."/>
            <person name="Perna N.T."/>
            <person name="Payne S.M."/>
            <person name="Runyen-Janecky L.J."/>
            <person name="Zhou S."/>
            <person name="Schwartz D.C."/>
            <person name="Blattner F.R."/>
        </authorList>
    </citation>
    <scope>NUCLEOTIDE SEQUENCE [LARGE SCALE GENOMIC DNA]</scope>
    <source>
        <strain>ATCC 700930 / 2457T / Serotype 2a</strain>
    </source>
</reference>
<gene>
    <name type="primary">frlB</name>
    <name type="ordered locus">SF3390</name>
    <name type="ordered locus">S4373</name>
</gene>
<accession>P0AC01</accession>
<accession>P45540</accession>
<name>FRLB_SHIFL</name>
<comment type="function">
    <text evidence="1">Catalyzes the reversible conversion of fructoselysine 6-phosphate to glucose 6-phosphate and lysine. May function in a fructoselysine degradation pathway that allows S.flexneri to grow on fructoselysine or psicoselysine.</text>
</comment>
<comment type="catalytic activity">
    <reaction evidence="1">
        <text>N(6)-(6-phospho-D-fructosyl)-L-lysine + H2O = D-glucose 6-phosphate + L-lysine</text>
        <dbReference type="Rhea" id="RHEA:28382"/>
        <dbReference type="ChEBI" id="CHEBI:15377"/>
        <dbReference type="ChEBI" id="CHEBI:32551"/>
        <dbReference type="ChEBI" id="CHEBI:61392"/>
        <dbReference type="ChEBI" id="CHEBI:61548"/>
    </reaction>
</comment>
<comment type="pathway">
    <text evidence="1">Carbohydrate metabolism; fructoselysine degradation; D-glucose 6-phosphate and lysine from fructoselysine: step 2/2.</text>
</comment>
<comment type="subunit">
    <text evidence="1">Homododecamer.</text>
</comment>
<sequence length="340" mass="38569">MLDIDKSTVDFLVTENMVQEVEKVLSHDVPLVHAIVEEMVKRDIDRIYFVACGSPLNAAQTAKHLADRFSDLQVYAISGWEFCDNTPYRLDDRCAVIGVSDYGKTEEVIKALELGRACGALTAAFTKRADSPITSAAEFSIDYQADCIWEIHLLLCYSVVLEMITRLAPNAEIGKIKNDLKQLPNALGHLVRTWEEKGRQLGELASQWPMIYTVAAGPLRPLGYKEGIVTLMEFTWTHGCVIESGEFRHGPLEIVEPGVPFLFLLGNDESRHTTERAINFVKQRTDNVIVIDYAEISQGLHPWLAPFLMFVPMEWLCYYLSIYKDHNPDERRYYGGLVEY</sequence>
<feature type="chain" id="PRO_0000136595" description="Fructoselysine 6-phosphate deglycase">
    <location>
        <begin position="1"/>
        <end position="340"/>
    </location>
</feature>
<feature type="domain" description="SIS 1" evidence="2">
    <location>
        <begin position="35"/>
        <end position="169"/>
    </location>
</feature>
<feature type="domain" description="SIS 2" evidence="2">
    <location>
        <begin position="201"/>
        <end position="331"/>
    </location>
</feature>
<organism>
    <name type="scientific">Shigella flexneri</name>
    <dbReference type="NCBI Taxonomy" id="623"/>
    <lineage>
        <taxon>Bacteria</taxon>
        <taxon>Pseudomonadati</taxon>
        <taxon>Pseudomonadota</taxon>
        <taxon>Gammaproteobacteria</taxon>
        <taxon>Enterobacterales</taxon>
        <taxon>Enterobacteriaceae</taxon>
        <taxon>Shigella</taxon>
    </lineage>
</organism>
<keyword id="KW-0378">Hydrolase</keyword>
<keyword id="KW-1185">Reference proteome</keyword>
<keyword id="KW-0677">Repeat</keyword>
<dbReference type="EC" id="3.5.-.-" evidence="1"/>
<dbReference type="EMBL" id="AE005674">
    <property type="protein sequence ID" value="AAN44852.2"/>
    <property type="molecule type" value="Genomic_DNA"/>
</dbReference>
<dbReference type="EMBL" id="AE014073">
    <property type="protein sequence ID" value="AAP19326.1"/>
    <property type="molecule type" value="Genomic_DNA"/>
</dbReference>
<dbReference type="RefSeq" id="WP_001295163.1">
    <property type="nucleotide sequence ID" value="NZ_WPGW01000003.1"/>
</dbReference>
<dbReference type="SMR" id="P0AC01"/>
<dbReference type="STRING" id="198214.SF3390"/>
<dbReference type="PaxDb" id="198214-SF3390"/>
<dbReference type="KEGG" id="sfl:SF3390"/>
<dbReference type="KEGG" id="sfx:S4373"/>
<dbReference type="PATRIC" id="fig|198214.7.peg.4003"/>
<dbReference type="HOGENOM" id="CLU_012520_3_0_6"/>
<dbReference type="UniPathway" id="UPA00784">
    <property type="reaction ID" value="UER00770"/>
</dbReference>
<dbReference type="Proteomes" id="UP000001006">
    <property type="component" value="Chromosome"/>
</dbReference>
<dbReference type="Proteomes" id="UP000002673">
    <property type="component" value="Chromosome"/>
</dbReference>
<dbReference type="GO" id="GO:0097367">
    <property type="term" value="F:carbohydrate derivative binding"/>
    <property type="evidence" value="ECO:0007669"/>
    <property type="project" value="InterPro"/>
</dbReference>
<dbReference type="GO" id="GO:0004360">
    <property type="term" value="F:glutamine-fructose-6-phosphate transaminase (isomerizing) activity"/>
    <property type="evidence" value="ECO:0007669"/>
    <property type="project" value="TreeGrafter"/>
</dbReference>
<dbReference type="GO" id="GO:0016787">
    <property type="term" value="F:hydrolase activity"/>
    <property type="evidence" value="ECO:0007669"/>
    <property type="project" value="UniProtKB-KW"/>
</dbReference>
<dbReference type="GO" id="GO:0006002">
    <property type="term" value="P:fructose 6-phosphate metabolic process"/>
    <property type="evidence" value="ECO:0007669"/>
    <property type="project" value="TreeGrafter"/>
</dbReference>
<dbReference type="GO" id="GO:0006487">
    <property type="term" value="P:protein N-linked glycosylation"/>
    <property type="evidence" value="ECO:0007669"/>
    <property type="project" value="TreeGrafter"/>
</dbReference>
<dbReference type="GO" id="GO:0006047">
    <property type="term" value="P:UDP-N-acetylglucosamine metabolic process"/>
    <property type="evidence" value="ECO:0007669"/>
    <property type="project" value="TreeGrafter"/>
</dbReference>
<dbReference type="CDD" id="cd05009">
    <property type="entry name" value="SIS_GlmS_GlmD_2"/>
    <property type="match status" value="1"/>
</dbReference>
<dbReference type="FunFam" id="3.40.50.10490:FF:000034">
    <property type="entry name" value="Fructoselysine 6-phosphate deglycase"/>
    <property type="match status" value="1"/>
</dbReference>
<dbReference type="Gene3D" id="3.40.50.10490">
    <property type="entry name" value="Glucose-6-phosphate isomerase like protein, domain 1"/>
    <property type="match status" value="2"/>
</dbReference>
<dbReference type="InterPro" id="IPR035490">
    <property type="entry name" value="GlmS/FrlB_SIS"/>
</dbReference>
<dbReference type="InterPro" id="IPR001347">
    <property type="entry name" value="SIS_dom"/>
</dbReference>
<dbReference type="InterPro" id="IPR046348">
    <property type="entry name" value="SIS_dom_sf"/>
</dbReference>
<dbReference type="NCBIfam" id="NF008481">
    <property type="entry name" value="PRK11382.1"/>
    <property type="match status" value="1"/>
</dbReference>
<dbReference type="PANTHER" id="PTHR10937:SF14">
    <property type="entry name" value="FRUCTOSELYSINE 6-PHOSPHATE DEGLYCASE"/>
    <property type="match status" value="1"/>
</dbReference>
<dbReference type="PANTHER" id="PTHR10937">
    <property type="entry name" value="GLUCOSAMINE--FRUCTOSE-6-PHOSPHATE AMINOTRANSFERASE, ISOMERIZING"/>
    <property type="match status" value="1"/>
</dbReference>
<dbReference type="Pfam" id="PF01380">
    <property type="entry name" value="SIS"/>
    <property type="match status" value="1"/>
</dbReference>
<dbReference type="SUPFAM" id="SSF53697">
    <property type="entry name" value="SIS domain"/>
    <property type="match status" value="1"/>
</dbReference>
<dbReference type="PROSITE" id="PS51464">
    <property type="entry name" value="SIS"/>
    <property type="match status" value="2"/>
</dbReference>
<proteinExistence type="inferred from homology"/>
<evidence type="ECO:0000250" key="1">
    <source>
        <dbReference type="UniProtKB" id="P0AC00"/>
    </source>
</evidence>
<evidence type="ECO:0000255" key="2">
    <source>
        <dbReference type="PROSITE-ProRule" id="PRU00797"/>
    </source>
</evidence>